<reference key="1">
    <citation type="submission" date="1999-09" db="EMBL/GenBank/DDBJ databases">
        <title>A novel gene expressed in human pheochromocytoma.</title>
        <authorList>
            <person name="Peng Y."/>
            <person name="Li Y."/>
            <person name="Tu Y."/>
            <person name="Xu S."/>
            <person name="Han Z."/>
            <person name="Fu G."/>
            <person name="Chen Z."/>
        </authorList>
    </citation>
    <scope>NUCLEOTIDE SEQUENCE [MRNA] (ISOFORM 2)</scope>
    <scope>VARIANTS LEU-97 AND PHE-346</scope>
    <source>
        <tissue>Pheochromocytoma</tissue>
    </source>
</reference>
<reference key="2">
    <citation type="journal article" date="2003" name="Genome Res.">
        <title>The secreted protein discovery initiative (SPDI), a large-scale effort to identify novel human secreted and transmembrane proteins: a bioinformatics assessment.</title>
        <authorList>
            <person name="Clark H.F."/>
            <person name="Gurney A.L."/>
            <person name="Abaya E."/>
            <person name="Baker K."/>
            <person name="Baldwin D.T."/>
            <person name="Brush J."/>
            <person name="Chen J."/>
            <person name="Chow B."/>
            <person name="Chui C."/>
            <person name="Crowley C."/>
            <person name="Currell B."/>
            <person name="Deuel B."/>
            <person name="Dowd P."/>
            <person name="Eaton D."/>
            <person name="Foster J.S."/>
            <person name="Grimaldi C."/>
            <person name="Gu Q."/>
            <person name="Hass P.E."/>
            <person name="Heldens S."/>
            <person name="Huang A."/>
            <person name="Kim H.S."/>
            <person name="Klimowski L."/>
            <person name="Jin Y."/>
            <person name="Johnson S."/>
            <person name="Lee J."/>
            <person name="Lewis L."/>
            <person name="Liao D."/>
            <person name="Mark M.R."/>
            <person name="Robbie E."/>
            <person name="Sanchez C."/>
            <person name="Schoenfeld J."/>
            <person name="Seshagiri S."/>
            <person name="Simmons L."/>
            <person name="Singh J."/>
            <person name="Smith V."/>
            <person name="Stinson J."/>
            <person name="Vagts A."/>
            <person name="Vandlen R.L."/>
            <person name="Watanabe C."/>
            <person name="Wieand D."/>
            <person name="Woods K."/>
            <person name="Xie M.-H."/>
            <person name="Yansura D.G."/>
            <person name="Yi S."/>
            <person name="Yu G."/>
            <person name="Yuan J."/>
            <person name="Zhang M."/>
            <person name="Zhang Z."/>
            <person name="Goddard A.D."/>
            <person name="Wood W.I."/>
            <person name="Godowski P.J."/>
            <person name="Gray A.M."/>
        </authorList>
    </citation>
    <scope>NUCLEOTIDE SEQUENCE [LARGE SCALE MRNA] (ISOFORM 1)</scope>
</reference>
<reference key="3">
    <citation type="journal article" date="2005" name="Nature">
        <title>Generation and annotation of the DNA sequences of human chromosomes 2 and 4.</title>
        <authorList>
            <person name="Hillier L.W."/>
            <person name="Graves T.A."/>
            <person name="Fulton R.S."/>
            <person name="Fulton L.A."/>
            <person name="Pepin K.H."/>
            <person name="Minx P."/>
            <person name="Wagner-McPherson C."/>
            <person name="Layman D."/>
            <person name="Wylie K."/>
            <person name="Sekhon M."/>
            <person name="Becker M.C."/>
            <person name="Fewell G.A."/>
            <person name="Delehaunty K.D."/>
            <person name="Miner T.L."/>
            <person name="Nash W.E."/>
            <person name="Kremitzki C."/>
            <person name="Oddy L."/>
            <person name="Du H."/>
            <person name="Sun H."/>
            <person name="Bradshaw-Cordum H."/>
            <person name="Ali J."/>
            <person name="Carter J."/>
            <person name="Cordes M."/>
            <person name="Harris A."/>
            <person name="Isak A."/>
            <person name="van Brunt A."/>
            <person name="Nguyen C."/>
            <person name="Du F."/>
            <person name="Courtney L."/>
            <person name="Kalicki J."/>
            <person name="Ozersky P."/>
            <person name="Abbott S."/>
            <person name="Armstrong J."/>
            <person name="Belter E.A."/>
            <person name="Caruso L."/>
            <person name="Cedroni M."/>
            <person name="Cotton M."/>
            <person name="Davidson T."/>
            <person name="Desai A."/>
            <person name="Elliott G."/>
            <person name="Erb T."/>
            <person name="Fronick C."/>
            <person name="Gaige T."/>
            <person name="Haakenson W."/>
            <person name="Haglund K."/>
            <person name="Holmes A."/>
            <person name="Harkins R."/>
            <person name="Kim K."/>
            <person name="Kruchowski S.S."/>
            <person name="Strong C.M."/>
            <person name="Grewal N."/>
            <person name="Goyea E."/>
            <person name="Hou S."/>
            <person name="Levy A."/>
            <person name="Martinka S."/>
            <person name="Mead K."/>
            <person name="McLellan M.D."/>
            <person name="Meyer R."/>
            <person name="Randall-Maher J."/>
            <person name="Tomlinson C."/>
            <person name="Dauphin-Kohlberg S."/>
            <person name="Kozlowicz-Reilly A."/>
            <person name="Shah N."/>
            <person name="Swearengen-Shahid S."/>
            <person name="Snider J."/>
            <person name="Strong J.T."/>
            <person name="Thompson J."/>
            <person name="Yoakum M."/>
            <person name="Leonard S."/>
            <person name="Pearman C."/>
            <person name="Trani L."/>
            <person name="Radionenko M."/>
            <person name="Waligorski J.E."/>
            <person name="Wang C."/>
            <person name="Rock S.M."/>
            <person name="Tin-Wollam A.-M."/>
            <person name="Maupin R."/>
            <person name="Latreille P."/>
            <person name="Wendl M.C."/>
            <person name="Yang S.-P."/>
            <person name="Pohl C."/>
            <person name="Wallis J.W."/>
            <person name="Spieth J."/>
            <person name="Bieri T.A."/>
            <person name="Berkowicz N."/>
            <person name="Nelson J.O."/>
            <person name="Osborne J."/>
            <person name="Ding L."/>
            <person name="Meyer R."/>
            <person name="Sabo A."/>
            <person name="Shotland Y."/>
            <person name="Sinha P."/>
            <person name="Wohldmann P.E."/>
            <person name="Cook L.L."/>
            <person name="Hickenbotham M.T."/>
            <person name="Eldred J."/>
            <person name="Williams D."/>
            <person name="Jones T.A."/>
            <person name="She X."/>
            <person name="Ciccarelli F.D."/>
            <person name="Izaurralde E."/>
            <person name="Taylor J."/>
            <person name="Schmutz J."/>
            <person name="Myers R.M."/>
            <person name="Cox D.R."/>
            <person name="Huang X."/>
            <person name="McPherson J.D."/>
            <person name="Mardis E.R."/>
            <person name="Clifton S.W."/>
            <person name="Warren W.C."/>
            <person name="Chinwalla A.T."/>
            <person name="Eddy S.R."/>
            <person name="Marra M.A."/>
            <person name="Ovcharenko I."/>
            <person name="Furey T.S."/>
            <person name="Miller W."/>
            <person name="Eichler E.E."/>
            <person name="Bork P."/>
            <person name="Suyama M."/>
            <person name="Torrents D."/>
            <person name="Waterston R.H."/>
            <person name="Wilson R.K."/>
        </authorList>
    </citation>
    <scope>NUCLEOTIDE SEQUENCE [LARGE SCALE GENOMIC DNA]</scope>
</reference>
<reference key="4">
    <citation type="journal article" date="2004" name="Genome Res.">
        <title>The status, quality, and expansion of the NIH full-length cDNA project: the Mammalian Gene Collection (MGC).</title>
        <authorList>
            <consortium name="The MGC Project Team"/>
        </authorList>
    </citation>
    <scope>NUCLEOTIDE SEQUENCE [LARGE SCALE MRNA] (ISOFORM 1)</scope>
    <scope>VARIANTS LEU-97 AND PHE-346</scope>
    <source>
        <tissue>Blood</tissue>
        <tissue>Lung</tissue>
    </source>
</reference>
<reference key="5">
    <citation type="journal article" date="2014" name="J. Proteomics">
        <title>An enzyme assisted RP-RPLC approach for in-depth analysis of human liver phosphoproteome.</title>
        <authorList>
            <person name="Bian Y."/>
            <person name="Song C."/>
            <person name="Cheng K."/>
            <person name="Dong M."/>
            <person name="Wang F."/>
            <person name="Huang J."/>
            <person name="Sun D."/>
            <person name="Wang L."/>
            <person name="Ye M."/>
            <person name="Zou H."/>
        </authorList>
    </citation>
    <scope>VARIANT [LARGE SCALE ANALYSIS] PHE-346</scope>
    <scope>IDENTIFICATION BY MASS SPECTROMETRY [LARGE SCALE ANALYSIS]</scope>
    <source>
        <tissue>Liver</tissue>
    </source>
</reference>
<proteinExistence type="evidence at protein level"/>
<organism>
    <name type="scientific">Homo sapiens</name>
    <name type="common">Human</name>
    <dbReference type="NCBI Taxonomy" id="9606"/>
    <lineage>
        <taxon>Eukaryota</taxon>
        <taxon>Metazoa</taxon>
        <taxon>Chordata</taxon>
        <taxon>Craniata</taxon>
        <taxon>Vertebrata</taxon>
        <taxon>Euteleostomi</taxon>
        <taxon>Mammalia</taxon>
        <taxon>Eutheria</taxon>
        <taxon>Euarchontoglires</taxon>
        <taxon>Primates</taxon>
        <taxon>Haplorrhini</taxon>
        <taxon>Catarrhini</taxon>
        <taxon>Hominidae</taxon>
        <taxon>Homo</taxon>
    </lineage>
</organism>
<comment type="cofactor">
    <cofactor evidence="1">
        <name>heme</name>
        <dbReference type="ChEBI" id="CHEBI:30413"/>
    </cofactor>
</comment>
<comment type="interaction">
    <interactant intactId="EBI-11066876">
        <id>Q6UW02</id>
    </interactant>
    <interactant intactId="EBI-10986212">
        <id>Q92508</id>
        <label>PIEZO1</label>
    </interactant>
    <organismsDiffer>false</organismsDiffer>
    <experiments>2</experiments>
</comment>
<comment type="subcellular location">
    <subcellularLocation>
        <location evidence="6">Membrane</location>
        <topology evidence="6">Single-pass membrane protein</topology>
    </subcellularLocation>
</comment>
<comment type="alternative products">
    <event type="alternative splicing"/>
    <isoform>
        <id>Q6UW02-1</id>
        <name>1</name>
        <sequence type="displayed"/>
    </isoform>
    <isoform>
        <id>Q6UW02-2</id>
        <name>2</name>
        <sequence type="described" ref="VSP_055585"/>
    </isoform>
</comment>
<comment type="similarity">
    <text evidence="6">Belongs to the cytochrome P450 family.</text>
</comment>
<name>CP20A_HUMAN</name>
<protein>
    <recommendedName>
        <fullName>Cytochrome P450 20A1</fullName>
        <ecNumber>1.14.-.-</ecNumber>
    </recommendedName>
</protein>
<dbReference type="EC" id="1.14.-.-"/>
<dbReference type="EMBL" id="AF183412">
    <property type="protein sequence ID" value="AAG09681.1"/>
    <property type="molecule type" value="mRNA"/>
</dbReference>
<dbReference type="EMBL" id="AY359068">
    <property type="protein sequence ID" value="AAQ89427.1"/>
    <property type="molecule type" value="mRNA"/>
</dbReference>
<dbReference type="EMBL" id="AC011737">
    <property type="protein sequence ID" value="AAX88915.1"/>
    <property type="molecule type" value="Genomic_DNA"/>
</dbReference>
<dbReference type="EMBL" id="BC020616">
    <property type="protein sequence ID" value="AAH20616.1"/>
    <property type="molecule type" value="mRNA"/>
</dbReference>
<dbReference type="EMBL" id="BC033752">
    <property type="protein sequence ID" value="AAH33752.1"/>
    <property type="molecule type" value="mRNA"/>
</dbReference>
<dbReference type="CCDS" id="CCDS2357.1">
    <molecule id="Q6UW02-1"/>
</dbReference>
<dbReference type="RefSeq" id="NP_803882.1">
    <molecule id="Q6UW02-1"/>
    <property type="nucleotide sequence ID" value="NM_177538.3"/>
</dbReference>
<dbReference type="SMR" id="Q6UW02"/>
<dbReference type="BioGRID" id="121506">
    <property type="interactions" value="26"/>
</dbReference>
<dbReference type="FunCoup" id="Q6UW02">
    <property type="interactions" value="483"/>
</dbReference>
<dbReference type="IntAct" id="Q6UW02">
    <property type="interactions" value="8"/>
</dbReference>
<dbReference type="STRING" id="9606.ENSP00000348380"/>
<dbReference type="iPTMnet" id="Q6UW02"/>
<dbReference type="PhosphoSitePlus" id="Q6UW02"/>
<dbReference type="BioMuta" id="CYP20A1"/>
<dbReference type="DMDM" id="74749375"/>
<dbReference type="jPOST" id="Q6UW02"/>
<dbReference type="MassIVE" id="Q6UW02"/>
<dbReference type="PaxDb" id="9606-ENSP00000348380"/>
<dbReference type="PeptideAtlas" id="Q6UW02"/>
<dbReference type="ProteomicsDB" id="67441">
    <molecule id="Q6UW02-1"/>
</dbReference>
<dbReference type="Pumba" id="Q6UW02"/>
<dbReference type="Antibodypedia" id="34163">
    <property type="antibodies" value="268 antibodies from 30 providers"/>
</dbReference>
<dbReference type="DNASU" id="57404"/>
<dbReference type="Ensembl" id="ENST00000356079.9">
    <molecule id="Q6UW02-1"/>
    <property type="protein sequence ID" value="ENSP00000348380.4"/>
    <property type="gene ID" value="ENSG00000119004.17"/>
</dbReference>
<dbReference type="GeneID" id="57404"/>
<dbReference type="KEGG" id="hsa:57404"/>
<dbReference type="MANE-Select" id="ENST00000356079.9">
    <property type="protein sequence ID" value="ENSP00000348380.4"/>
    <property type="RefSeq nucleotide sequence ID" value="NM_177538.3"/>
    <property type="RefSeq protein sequence ID" value="NP_803882.1"/>
</dbReference>
<dbReference type="UCSC" id="uc002uzv.5">
    <molecule id="Q6UW02-1"/>
    <property type="organism name" value="human"/>
</dbReference>
<dbReference type="AGR" id="HGNC:20576"/>
<dbReference type="CTD" id="57404"/>
<dbReference type="DisGeNET" id="57404"/>
<dbReference type="GeneCards" id="CYP20A1"/>
<dbReference type="HGNC" id="HGNC:20576">
    <property type="gene designation" value="CYP20A1"/>
</dbReference>
<dbReference type="HPA" id="ENSG00000119004">
    <property type="expression patterns" value="Low tissue specificity"/>
</dbReference>
<dbReference type="neXtProt" id="NX_Q6UW02"/>
<dbReference type="OpenTargets" id="ENSG00000119004"/>
<dbReference type="PharmGKB" id="PA134911420"/>
<dbReference type="VEuPathDB" id="HostDB:ENSG00000119004"/>
<dbReference type="eggNOG" id="KOG0157">
    <property type="taxonomic scope" value="Eukaryota"/>
</dbReference>
<dbReference type="GeneTree" id="ENSGT00500000044939"/>
<dbReference type="HOGENOM" id="CLU_050960_1_0_1"/>
<dbReference type="InParanoid" id="Q6UW02"/>
<dbReference type="OrthoDB" id="1470350at2759"/>
<dbReference type="PAN-GO" id="Q6UW02">
    <property type="GO annotations" value="0 GO annotations based on evolutionary models"/>
</dbReference>
<dbReference type="PhylomeDB" id="Q6UW02"/>
<dbReference type="TreeFam" id="TF105089"/>
<dbReference type="PathwayCommons" id="Q6UW02"/>
<dbReference type="SignaLink" id="Q6UW02"/>
<dbReference type="BioGRID-ORCS" id="57404">
    <property type="hits" value="7 hits in 1156 CRISPR screens"/>
</dbReference>
<dbReference type="CD-CODE" id="232F8A39">
    <property type="entry name" value="P-body"/>
</dbReference>
<dbReference type="CD-CODE" id="DEE660B4">
    <property type="entry name" value="Stress granule"/>
</dbReference>
<dbReference type="ChiTaRS" id="CYP20A1">
    <property type="organism name" value="human"/>
</dbReference>
<dbReference type="GeneWiki" id="CYP20A1"/>
<dbReference type="GenomeRNAi" id="57404"/>
<dbReference type="Pharos" id="Q6UW02">
    <property type="development level" value="Tbio"/>
</dbReference>
<dbReference type="PRO" id="PR:Q6UW02"/>
<dbReference type="Proteomes" id="UP000005640">
    <property type="component" value="Chromosome 2"/>
</dbReference>
<dbReference type="RNAct" id="Q6UW02">
    <property type="molecule type" value="protein"/>
</dbReference>
<dbReference type="Bgee" id="ENSG00000119004">
    <property type="expression patterns" value="Expressed in calcaneal tendon and 150 other cell types or tissues"/>
</dbReference>
<dbReference type="ExpressionAtlas" id="Q6UW02">
    <property type="expression patterns" value="baseline and differential"/>
</dbReference>
<dbReference type="GO" id="GO:0016020">
    <property type="term" value="C:membrane"/>
    <property type="evidence" value="ECO:0007005"/>
    <property type="project" value="UniProtKB"/>
</dbReference>
<dbReference type="GO" id="GO:0020037">
    <property type="term" value="F:heme binding"/>
    <property type="evidence" value="ECO:0007669"/>
    <property type="project" value="InterPro"/>
</dbReference>
<dbReference type="GO" id="GO:0005506">
    <property type="term" value="F:iron ion binding"/>
    <property type="evidence" value="ECO:0007669"/>
    <property type="project" value="InterPro"/>
</dbReference>
<dbReference type="GO" id="GO:0004497">
    <property type="term" value="F:monooxygenase activity"/>
    <property type="evidence" value="ECO:0007669"/>
    <property type="project" value="UniProtKB-KW"/>
</dbReference>
<dbReference type="GO" id="GO:0016705">
    <property type="term" value="F:oxidoreductase activity, acting on paired donors, with incorporation or reduction of molecular oxygen"/>
    <property type="evidence" value="ECO:0007669"/>
    <property type="project" value="InterPro"/>
</dbReference>
<dbReference type="CDD" id="cd20627">
    <property type="entry name" value="CYP20A1"/>
    <property type="match status" value="1"/>
</dbReference>
<dbReference type="FunFam" id="1.10.630.10:FF:000082">
    <property type="entry name" value="Cytochrome P450 family 20 subfamily A member 1"/>
    <property type="match status" value="1"/>
</dbReference>
<dbReference type="Gene3D" id="1.10.630.10">
    <property type="entry name" value="Cytochrome P450"/>
    <property type="match status" value="1"/>
</dbReference>
<dbReference type="InterPro" id="IPR052666">
    <property type="entry name" value="CYP450_20A1-like"/>
</dbReference>
<dbReference type="InterPro" id="IPR001128">
    <property type="entry name" value="Cyt_P450"/>
</dbReference>
<dbReference type="InterPro" id="IPR002401">
    <property type="entry name" value="Cyt_P450_E_grp-I"/>
</dbReference>
<dbReference type="InterPro" id="IPR036396">
    <property type="entry name" value="Cyt_P450_sf"/>
</dbReference>
<dbReference type="PANTHER" id="PTHR24280">
    <property type="entry name" value="CYTOCHROME P450 20A1"/>
    <property type="match status" value="1"/>
</dbReference>
<dbReference type="PANTHER" id="PTHR24280:SF4">
    <property type="entry name" value="CYTOCHROME P450 20A1"/>
    <property type="match status" value="1"/>
</dbReference>
<dbReference type="Pfam" id="PF00067">
    <property type="entry name" value="p450"/>
    <property type="match status" value="1"/>
</dbReference>
<dbReference type="PRINTS" id="PR00463">
    <property type="entry name" value="EP450I"/>
</dbReference>
<dbReference type="SUPFAM" id="SSF48264">
    <property type="entry name" value="Cytochrome P450"/>
    <property type="match status" value="1"/>
</dbReference>
<feature type="chain" id="PRO_0000318095" description="Cytochrome P450 20A1">
    <location>
        <begin position="1"/>
        <end position="462"/>
    </location>
</feature>
<feature type="transmembrane region" description="Helical" evidence="2">
    <location>
        <begin position="4"/>
        <end position="24"/>
    </location>
</feature>
<feature type="binding site" description="axial binding residue" evidence="1">
    <location>
        <position position="409"/>
    </location>
    <ligand>
        <name>heme</name>
        <dbReference type="ChEBI" id="CHEBI:30413"/>
    </ligand>
    <ligandPart>
        <name>Fe</name>
        <dbReference type="ChEBI" id="CHEBI:18248"/>
    </ligandPart>
</feature>
<feature type="splice variant" id="VSP_055585" description="In isoform 2." evidence="5">
    <original>VWSEIGKGFLDGSLDKNMTRKKQYEDALMQLESVLRNIIKERKGRNFSQHI</original>
    <variation>PSCNWSLFKEHHKRTKRKELQSTY</variation>
    <location>
        <begin position="201"/>
        <end position="251"/>
    </location>
</feature>
<feature type="sequence variant" id="VAR_059153" description="In dbSNP:rs2043449." evidence="3 4">
    <original>S</original>
    <variation>L</variation>
    <location>
        <position position="97"/>
    </location>
</feature>
<feature type="sequence variant" id="VAR_059154" description="In dbSNP:rs1048013." evidence="3 4 7">
    <original>L</original>
    <variation>F</variation>
    <location>
        <position position="346"/>
    </location>
</feature>
<feature type="sequence conflict" description="In Ref. 1; AAG09681." evidence="6" ref="1">
    <original>L</original>
    <variation>V</variation>
    <location>
        <position position="77"/>
    </location>
</feature>
<feature type="sequence conflict" description="In Ref. 4; AAH20616." evidence="6" ref="4">
    <original>K</original>
    <variation>E</variation>
    <location>
        <position position="124"/>
    </location>
</feature>
<feature type="sequence conflict" description="In Ref. 1; AAG09681." evidence="6" ref="1">
    <original>TV</original>
    <variation>LF</variation>
    <location>
        <begin position="333"/>
        <end position="334"/>
    </location>
</feature>
<sequence length="462" mass="52432">MLDFAIFAVTFLLALVGAVLYLYPASRQAAGIPGITPTEEKDGNLPDIVNSGSLHEFLVNLHERYGPVVSFWFGRRLVVSLGTVDVLKQHINPNKTSDPFETMLKSLLRYQSGGGSVSENHMRKKLYENGVTDSLKSNFALLLKLSEELLDKWLSYPETQHVPLSQHMLGFAMKSVTQMVMGSTFEDDQEVIRFQKNHGTVWSEIGKGFLDGSLDKNMTRKKQYEDALMQLESVLRNIIKERKGRNFSQHIFIDSLVQGNLNDQQILEDSMIFSLASCIITAKLCTWAICFLTTSEEVQKKLYEEINQVFGNGPVTPEKIEQLRYCQHVLCETVRTAKLTPVSAQLQDIEGKIDRFIIPRETLVLYALGVVLQDPNTWPSPHKFDPDRFDDELVMKTFSSLGFSGTQECPELRFAYMVTTVLLSVLVKRLHLLSVEGQVIETKYELVTSSREEAWITVSKRY</sequence>
<evidence type="ECO:0000250" key="1"/>
<evidence type="ECO:0000255" key="2"/>
<evidence type="ECO:0000269" key="3">
    <source>
    </source>
</evidence>
<evidence type="ECO:0000269" key="4">
    <source ref="1"/>
</evidence>
<evidence type="ECO:0000303" key="5">
    <source ref="1"/>
</evidence>
<evidence type="ECO:0000305" key="6"/>
<evidence type="ECO:0007744" key="7">
    <source>
    </source>
</evidence>
<keyword id="KW-0025">Alternative splicing</keyword>
<keyword id="KW-0349">Heme</keyword>
<keyword id="KW-0408">Iron</keyword>
<keyword id="KW-0472">Membrane</keyword>
<keyword id="KW-0479">Metal-binding</keyword>
<keyword id="KW-0503">Monooxygenase</keyword>
<keyword id="KW-0560">Oxidoreductase</keyword>
<keyword id="KW-1267">Proteomics identification</keyword>
<keyword id="KW-1185">Reference proteome</keyword>
<keyword id="KW-0812">Transmembrane</keyword>
<keyword id="KW-1133">Transmembrane helix</keyword>
<accession>Q6UW02</accession>
<accession>Q4ZG61</accession>
<accession>Q8N4Q8</accession>
<accession>Q8WWA9</accession>
<accession>Q9HC04</accession>
<gene>
    <name type="primary">CYP20A1</name>
    <name type="ORF">UNQ667/PRO1301</name>
</gene>